<organism>
    <name type="scientific">Lactococcus lactis subsp. cremoris (strain MG1363)</name>
    <dbReference type="NCBI Taxonomy" id="416870"/>
    <lineage>
        <taxon>Bacteria</taxon>
        <taxon>Bacillati</taxon>
        <taxon>Bacillota</taxon>
        <taxon>Bacilli</taxon>
        <taxon>Lactobacillales</taxon>
        <taxon>Streptococcaceae</taxon>
        <taxon>Lactococcus</taxon>
        <taxon>Lactococcus cremoris subsp. cremoris</taxon>
    </lineage>
</organism>
<comment type="function">
    <text evidence="1">Allows the formation of correctly charged Asn-tRNA(Asn) or Gln-tRNA(Gln) through the transamidation of misacylated Asp-tRNA(Asn) or Glu-tRNA(Gln) in organisms which lack either or both of asparaginyl-tRNA or glutaminyl-tRNA synthetases. The reaction takes place in the presence of glutamine and ATP through an activated phospho-Asp-tRNA(Asn) or phospho-Glu-tRNA(Gln).</text>
</comment>
<comment type="catalytic activity">
    <reaction evidence="1">
        <text>L-glutamyl-tRNA(Gln) + L-glutamine + ATP + H2O = L-glutaminyl-tRNA(Gln) + L-glutamate + ADP + phosphate + H(+)</text>
        <dbReference type="Rhea" id="RHEA:17521"/>
        <dbReference type="Rhea" id="RHEA-COMP:9681"/>
        <dbReference type="Rhea" id="RHEA-COMP:9684"/>
        <dbReference type="ChEBI" id="CHEBI:15377"/>
        <dbReference type="ChEBI" id="CHEBI:15378"/>
        <dbReference type="ChEBI" id="CHEBI:29985"/>
        <dbReference type="ChEBI" id="CHEBI:30616"/>
        <dbReference type="ChEBI" id="CHEBI:43474"/>
        <dbReference type="ChEBI" id="CHEBI:58359"/>
        <dbReference type="ChEBI" id="CHEBI:78520"/>
        <dbReference type="ChEBI" id="CHEBI:78521"/>
        <dbReference type="ChEBI" id="CHEBI:456216"/>
    </reaction>
</comment>
<comment type="catalytic activity">
    <reaction evidence="1">
        <text>L-aspartyl-tRNA(Asn) + L-glutamine + ATP + H2O = L-asparaginyl-tRNA(Asn) + L-glutamate + ADP + phosphate + 2 H(+)</text>
        <dbReference type="Rhea" id="RHEA:14513"/>
        <dbReference type="Rhea" id="RHEA-COMP:9674"/>
        <dbReference type="Rhea" id="RHEA-COMP:9677"/>
        <dbReference type="ChEBI" id="CHEBI:15377"/>
        <dbReference type="ChEBI" id="CHEBI:15378"/>
        <dbReference type="ChEBI" id="CHEBI:29985"/>
        <dbReference type="ChEBI" id="CHEBI:30616"/>
        <dbReference type="ChEBI" id="CHEBI:43474"/>
        <dbReference type="ChEBI" id="CHEBI:58359"/>
        <dbReference type="ChEBI" id="CHEBI:78515"/>
        <dbReference type="ChEBI" id="CHEBI:78516"/>
        <dbReference type="ChEBI" id="CHEBI:456216"/>
    </reaction>
</comment>
<comment type="subunit">
    <text evidence="1">Heterotrimer of A, B and C subunits.</text>
</comment>
<comment type="similarity">
    <text evidence="1">Belongs to the GatC family.</text>
</comment>
<accession>A2RHP4</accession>
<evidence type="ECO:0000255" key="1">
    <source>
        <dbReference type="HAMAP-Rule" id="MF_00122"/>
    </source>
</evidence>
<protein>
    <recommendedName>
        <fullName evidence="1">Aspartyl/glutamyl-tRNA(Asn/Gln) amidotransferase subunit C</fullName>
        <shortName evidence="1">Asp/Glu-ADT subunit C</shortName>
        <ecNumber evidence="1">6.3.5.-</ecNumber>
    </recommendedName>
</protein>
<name>GATC_LACLM</name>
<dbReference type="EC" id="6.3.5.-" evidence="1"/>
<dbReference type="EMBL" id="AM406671">
    <property type="protein sequence ID" value="CAL96781.1"/>
    <property type="molecule type" value="Genomic_DNA"/>
</dbReference>
<dbReference type="RefSeq" id="WP_011834264.1">
    <property type="nucleotide sequence ID" value="NC_009004.1"/>
</dbReference>
<dbReference type="SMR" id="A2RHP4"/>
<dbReference type="STRING" id="416870.llmg_0174"/>
<dbReference type="KEGG" id="llm:llmg_0174"/>
<dbReference type="eggNOG" id="COG0721">
    <property type="taxonomic scope" value="Bacteria"/>
</dbReference>
<dbReference type="HOGENOM" id="CLU_105899_1_2_9"/>
<dbReference type="OrthoDB" id="9813938at2"/>
<dbReference type="PhylomeDB" id="A2RHP4"/>
<dbReference type="Proteomes" id="UP000000364">
    <property type="component" value="Chromosome"/>
</dbReference>
<dbReference type="GO" id="GO:0050566">
    <property type="term" value="F:asparaginyl-tRNA synthase (glutamine-hydrolyzing) activity"/>
    <property type="evidence" value="ECO:0007669"/>
    <property type="project" value="RHEA"/>
</dbReference>
<dbReference type="GO" id="GO:0005524">
    <property type="term" value="F:ATP binding"/>
    <property type="evidence" value="ECO:0007669"/>
    <property type="project" value="UniProtKB-KW"/>
</dbReference>
<dbReference type="GO" id="GO:0050567">
    <property type="term" value="F:glutaminyl-tRNA synthase (glutamine-hydrolyzing) activity"/>
    <property type="evidence" value="ECO:0007669"/>
    <property type="project" value="UniProtKB-UniRule"/>
</dbReference>
<dbReference type="GO" id="GO:0070681">
    <property type="term" value="P:glutaminyl-tRNAGln biosynthesis via transamidation"/>
    <property type="evidence" value="ECO:0007669"/>
    <property type="project" value="TreeGrafter"/>
</dbReference>
<dbReference type="GO" id="GO:0006450">
    <property type="term" value="P:regulation of translational fidelity"/>
    <property type="evidence" value="ECO:0007669"/>
    <property type="project" value="InterPro"/>
</dbReference>
<dbReference type="GO" id="GO:0006412">
    <property type="term" value="P:translation"/>
    <property type="evidence" value="ECO:0007669"/>
    <property type="project" value="UniProtKB-UniRule"/>
</dbReference>
<dbReference type="Gene3D" id="1.10.20.60">
    <property type="entry name" value="Glu-tRNAGln amidotransferase C subunit, N-terminal domain"/>
    <property type="match status" value="1"/>
</dbReference>
<dbReference type="HAMAP" id="MF_00122">
    <property type="entry name" value="GatC"/>
    <property type="match status" value="1"/>
</dbReference>
<dbReference type="InterPro" id="IPR036113">
    <property type="entry name" value="Asp/Glu-ADT_sf_sub_c"/>
</dbReference>
<dbReference type="InterPro" id="IPR003837">
    <property type="entry name" value="GatC"/>
</dbReference>
<dbReference type="NCBIfam" id="TIGR00135">
    <property type="entry name" value="gatC"/>
    <property type="match status" value="1"/>
</dbReference>
<dbReference type="PANTHER" id="PTHR15004">
    <property type="entry name" value="GLUTAMYL-TRNA(GLN) AMIDOTRANSFERASE SUBUNIT C, MITOCHONDRIAL"/>
    <property type="match status" value="1"/>
</dbReference>
<dbReference type="PANTHER" id="PTHR15004:SF0">
    <property type="entry name" value="GLUTAMYL-TRNA(GLN) AMIDOTRANSFERASE SUBUNIT C, MITOCHONDRIAL"/>
    <property type="match status" value="1"/>
</dbReference>
<dbReference type="Pfam" id="PF02686">
    <property type="entry name" value="GatC"/>
    <property type="match status" value="1"/>
</dbReference>
<dbReference type="SUPFAM" id="SSF141000">
    <property type="entry name" value="Glu-tRNAGln amidotransferase C subunit"/>
    <property type="match status" value="1"/>
</dbReference>
<sequence>MSQITEEQVKHVALLSKLEFSENEVKSFTVTFGKIIDMVEMLDEVDTDGVPFTMNVADNLNFMREDVAEKGLDREKLMAAVPEKEDGFIKVPAMLSDGGDA</sequence>
<proteinExistence type="inferred from homology"/>
<gene>
    <name evidence="1" type="primary">gatC</name>
    <name type="ordered locus">llmg_0174</name>
</gene>
<keyword id="KW-0067">ATP-binding</keyword>
<keyword id="KW-0436">Ligase</keyword>
<keyword id="KW-0547">Nucleotide-binding</keyword>
<keyword id="KW-0648">Protein biosynthesis</keyword>
<reference key="1">
    <citation type="journal article" date="2007" name="J. Bacteriol.">
        <title>The complete genome sequence of the lactic acid bacterial paradigm Lactococcus lactis subsp. cremoris MG1363.</title>
        <authorList>
            <person name="Wegmann U."/>
            <person name="O'Connell-Motherway M."/>
            <person name="Zomer A."/>
            <person name="Buist G."/>
            <person name="Shearman C."/>
            <person name="Canchaya C."/>
            <person name="Ventura M."/>
            <person name="Goesmann A."/>
            <person name="Gasson M.J."/>
            <person name="Kuipers O.P."/>
            <person name="van Sinderen D."/>
            <person name="Kok J."/>
        </authorList>
    </citation>
    <scope>NUCLEOTIDE SEQUENCE [LARGE SCALE GENOMIC DNA]</scope>
    <source>
        <strain>MG1363</strain>
    </source>
</reference>
<feature type="chain" id="PRO_1000016135" description="Aspartyl/glutamyl-tRNA(Asn/Gln) amidotransferase subunit C">
    <location>
        <begin position="1"/>
        <end position="101"/>
    </location>
</feature>